<evidence type="ECO:0000255" key="1">
    <source>
        <dbReference type="HAMAP-Rule" id="MF_00009"/>
    </source>
</evidence>
<gene>
    <name evidence="1" type="primary">ybeY</name>
    <name type="ordered locus">UU490</name>
</gene>
<feature type="chain" id="PRO_0000102561" description="Endoribonuclease YbeY">
    <location>
        <begin position="1"/>
        <end position="155"/>
    </location>
</feature>
<feature type="binding site" evidence="1">
    <location>
        <position position="113"/>
    </location>
    <ligand>
        <name>Zn(2+)</name>
        <dbReference type="ChEBI" id="CHEBI:29105"/>
        <note>catalytic</note>
    </ligand>
</feature>
<feature type="binding site" evidence="1">
    <location>
        <position position="117"/>
    </location>
    <ligand>
        <name>Zn(2+)</name>
        <dbReference type="ChEBI" id="CHEBI:29105"/>
        <note>catalytic</note>
    </ligand>
</feature>
<feature type="binding site" evidence="1">
    <location>
        <position position="123"/>
    </location>
    <ligand>
        <name>Zn(2+)</name>
        <dbReference type="ChEBI" id="CHEBI:29105"/>
        <note>catalytic</note>
    </ligand>
</feature>
<proteinExistence type="inferred from homology"/>
<reference key="1">
    <citation type="journal article" date="2000" name="Nature">
        <title>The complete sequence of the mucosal pathogen Ureaplasma urealyticum.</title>
        <authorList>
            <person name="Glass J.I."/>
            <person name="Lefkowitz E.J."/>
            <person name="Glass J.S."/>
            <person name="Heiner C.R."/>
            <person name="Chen E.Y."/>
            <person name="Cassell G.H."/>
        </authorList>
    </citation>
    <scope>NUCLEOTIDE SEQUENCE [LARGE SCALE GENOMIC DNA]</scope>
    <source>
        <strain>ATCC 700970</strain>
    </source>
</reference>
<keyword id="KW-0963">Cytoplasm</keyword>
<keyword id="KW-0255">Endonuclease</keyword>
<keyword id="KW-0378">Hydrolase</keyword>
<keyword id="KW-0479">Metal-binding</keyword>
<keyword id="KW-0540">Nuclease</keyword>
<keyword id="KW-1185">Reference proteome</keyword>
<keyword id="KW-0690">Ribosome biogenesis</keyword>
<keyword id="KW-0698">rRNA processing</keyword>
<keyword id="KW-0862">Zinc</keyword>
<sequence length="155" mass="18449">MHFLITNEVKKIFNDKLYSQRFKQITDLVSTKLNIDKKRFFECHFVDEKTIQEINKNYRNKDYITDVISFAFDDGEIITPLLGEMYICYQKVVDQASQFAHSFERELCFLFTHGLLHLLGYDHIKIEDEKIMFALQDEILNELKITRNINGARND</sequence>
<organism>
    <name type="scientific">Ureaplasma parvum serovar 3 (strain ATCC 700970)</name>
    <dbReference type="NCBI Taxonomy" id="273119"/>
    <lineage>
        <taxon>Bacteria</taxon>
        <taxon>Bacillati</taxon>
        <taxon>Mycoplasmatota</taxon>
        <taxon>Mycoplasmoidales</taxon>
        <taxon>Mycoplasmoidaceae</taxon>
        <taxon>Ureaplasma</taxon>
    </lineage>
</organism>
<dbReference type="EC" id="3.1.-.-" evidence="1"/>
<dbReference type="EMBL" id="AF222894">
    <property type="protein sequence ID" value="AAF30902.1"/>
    <property type="molecule type" value="Genomic_DNA"/>
</dbReference>
<dbReference type="RefSeq" id="WP_006688705.1">
    <property type="nucleotide sequence ID" value="NC_002162.1"/>
</dbReference>
<dbReference type="SMR" id="Q9PQ00"/>
<dbReference type="STRING" id="273119.UU490"/>
<dbReference type="EnsemblBacteria" id="AAF30902">
    <property type="protein sequence ID" value="AAF30902"/>
    <property type="gene ID" value="UU490"/>
</dbReference>
<dbReference type="GeneID" id="29672373"/>
<dbReference type="KEGG" id="uur:UU490"/>
<dbReference type="eggNOG" id="COG0319">
    <property type="taxonomic scope" value="Bacteria"/>
</dbReference>
<dbReference type="HOGENOM" id="CLU_106710_3_0_14"/>
<dbReference type="OrthoDB" id="9807740at2"/>
<dbReference type="Proteomes" id="UP000000423">
    <property type="component" value="Chromosome"/>
</dbReference>
<dbReference type="GO" id="GO:0005737">
    <property type="term" value="C:cytoplasm"/>
    <property type="evidence" value="ECO:0007669"/>
    <property type="project" value="UniProtKB-SubCell"/>
</dbReference>
<dbReference type="GO" id="GO:0004222">
    <property type="term" value="F:metalloendopeptidase activity"/>
    <property type="evidence" value="ECO:0007669"/>
    <property type="project" value="InterPro"/>
</dbReference>
<dbReference type="GO" id="GO:0004521">
    <property type="term" value="F:RNA endonuclease activity"/>
    <property type="evidence" value="ECO:0007669"/>
    <property type="project" value="UniProtKB-UniRule"/>
</dbReference>
<dbReference type="GO" id="GO:0008270">
    <property type="term" value="F:zinc ion binding"/>
    <property type="evidence" value="ECO:0007669"/>
    <property type="project" value="UniProtKB-UniRule"/>
</dbReference>
<dbReference type="GO" id="GO:0006364">
    <property type="term" value="P:rRNA processing"/>
    <property type="evidence" value="ECO:0007669"/>
    <property type="project" value="UniProtKB-UniRule"/>
</dbReference>
<dbReference type="Gene3D" id="3.40.390.30">
    <property type="entry name" value="Metalloproteases ('zincins'), catalytic domain"/>
    <property type="match status" value="1"/>
</dbReference>
<dbReference type="HAMAP" id="MF_00009">
    <property type="entry name" value="Endoribonucl_YbeY"/>
    <property type="match status" value="1"/>
</dbReference>
<dbReference type="InterPro" id="IPR023091">
    <property type="entry name" value="MetalPrtase_cat_dom_sf_prd"/>
</dbReference>
<dbReference type="InterPro" id="IPR002036">
    <property type="entry name" value="YbeY"/>
</dbReference>
<dbReference type="InterPro" id="IPR020549">
    <property type="entry name" value="YbeY_CS"/>
</dbReference>
<dbReference type="NCBIfam" id="TIGR00043">
    <property type="entry name" value="rRNA maturation RNase YbeY"/>
    <property type="match status" value="1"/>
</dbReference>
<dbReference type="PANTHER" id="PTHR46986">
    <property type="entry name" value="ENDORIBONUCLEASE YBEY, CHLOROPLASTIC"/>
    <property type="match status" value="1"/>
</dbReference>
<dbReference type="PANTHER" id="PTHR46986:SF1">
    <property type="entry name" value="ENDORIBONUCLEASE YBEY, CHLOROPLASTIC"/>
    <property type="match status" value="1"/>
</dbReference>
<dbReference type="Pfam" id="PF02130">
    <property type="entry name" value="YbeY"/>
    <property type="match status" value="1"/>
</dbReference>
<dbReference type="SUPFAM" id="SSF55486">
    <property type="entry name" value="Metalloproteases ('zincins'), catalytic domain"/>
    <property type="match status" value="1"/>
</dbReference>
<dbReference type="PROSITE" id="PS01306">
    <property type="entry name" value="UPF0054"/>
    <property type="match status" value="1"/>
</dbReference>
<name>YBEY_UREPA</name>
<protein>
    <recommendedName>
        <fullName evidence="1">Endoribonuclease YbeY</fullName>
        <ecNumber evidence="1">3.1.-.-</ecNumber>
    </recommendedName>
</protein>
<accession>Q9PQ00</accession>
<comment type="function">
    <text evidence="1">Single strand-specific metallo-endoribonuclease involved in late-stage 70S ribosome quality control and in maturation of the 3' terminus of the 16S rRNA.</text>
</comment>
<comment type="cofactor">
    <cofactor evidence="1">
        <name>Zn(2+)</name>
        <dbReference type="ChEBI" id="CHEBI:29105"/>
    </cofactor>
    <text evidence="1">Binds 1 zinc ion.</text>
</comment>
<comment type="subcellular location">
    <subcellularLocation>
        <location evidence="1">Cytoplasm</location>
    </subcellularLocation>
</comment>
<comment type="similarity">
    <text evidence="1">Belongs to the endoribonuclease YbeY family.</text>
</comment>